<keyword id="KW-0002">3D-structure</keyword>
<keyword id="KW-0025">Alternative splicing</keyword>
<keyword id="KW-0249">Electron transport</keyword>
<keyword id="KW-0349">Heme</keyword>
<keyword id="KW-0408">Iron</keyword>
<keyword id="KW-0472">Membrane</keyword>
<keyword id="KW-0479">Metal-binding</keyword>
<keyword id="KW-0496">Mitochondrion</keyword>
<keyword id="KW-0999">Mitochondrion inner membrane</keyword>
<keyword id="KW-1185">Reference proteome</keyword>
<keyword id="KW-0679">Respiratory chain</keyword>
<keyword id="KW-0809">Transit peptide</keyword>
<keyword id="KW-0812">Transmembrane</keyword>
<keyword id="KW-1133">Transmembrane helix</keyword>
<keyword id="KW-0813">Transport</keyword>
<sequence length="307" mass="33690">MVGGGVIRQLLRRKLHSQSVATPVLSWLSSKKANEDAGSAGLRAFALMGAGITGLLSFSTVASADEAEHGLECPNYPWPHEGILSSYDHASIRRGHQVYQQVCASCHSMSLISYRDLVGVAYTEEEAKAMAAEIEVVDGPNDEGEMFTRPGKLSDRLPEPYSNESAARFANGGAYPPDLSLVTKARHNGQNYVFALLTGYRDPPAGISIREGLHYNPYFPGGAIAMPKMLNDEAVEYEDGTPATEAQMGKDVVSFLSWAAEPEMEERKLMGFKWIFLLSLALLQAAYYRRLKWSVLKSRKLVLDVVN</sequence>
<evidence type="ECO:0000250" key="1"/>
<evidence type="ECO:0000250" key="2">
    <source>
        <dbReference type="UniProtKB" id="P07143"/>
    </source>
</evidence>
<evidence type="ECO:0000255" key="3"/>
<evidence type="ECO:0000255" key="4">
    <source>
        <dbReference type="PROSITE-ProRule" id="PRU00433"/>
    </source>
</evidence>
<evidence type="ECO:0000269" key="5">
    <source>
    </source>
</evidence>
<evidence type="ECO:0000269" key="6">
    <source>
    </source>
</evidence>
<evidence type="ECO:0000269" key="7">
    <source>
    </source>
</evidence>
<evidence type="ECO:0000305" key="8"/>
<evidence type="ECO:0007829" key="9">
    <source>
        <dbReference type="PDB" id="8BEL"/>
    </source>
</evidence>
<comment type="function">
    <text evidence="2">Component of the ubiquinol-cytochrome c oxidoreductase, a multisubunit transmembrane complex that is part of the mitochondrial electron transport chain which drives oxidative phosphorylation. The respiratory chain contains 3 multisubunit complexes succinate dehydrogenase (complex II, CII), ubiquinol-cytochrome c oxidoreductase (cytochrome b-c1 complex, complex III, CIII) and cytochrome c oxidase (complex IV, CIV), that cooperate to transfer electrons derived from NADH and succinate to molecular oxygen, creating an electrochemical gradient over the inner membrane that drives transmembrane transport and the ATP synthase. The cytochrome b-c1 complex catalyzes electron transfer from ubiquinol to cytochrome c, linking this redox reaction to translocation of protons across the mitochondrial inner membrane, with protons being carried across the membrane as hydrogens on the quinol. In the process called Q cycle, 2 protons are consumed from the matrix, 4 protons are released into the intermembrane space and 2 electrons are passed to cytochrome c. Cytochrome c1 is a catalytic core subunit containing a c-type heme. It transfers electrons from the [2Fe-2S] iron-sulfur cluster of the Rieske protein to cytochrome c.</text>
</comment>
<comment type="subunit">
    <text evidence="5 6 7">Component of the ubiquinol-cytochrome c oxidoreductase (cytochrome b-c1 complex, complex III, CIII), a multisubunit enzyme composed of 10 subunits. The complex is composed of 3 respiratory subunits cytochrome b (MT-CYB), cytochrome c1 (CYC1-1 or CYC1-2) and Rieske protein (UCR1-1 or UCR1-2), 2 core protein subunits MPPalpha1 (or MPPalpha2) and MPPB, and 5 low-molecular weight protein subunits QCR7-1 (or QCR7-2), UCRQ-1 (or UCRQ-2), QCR9, UCRY and probably QCR6-1 (or QCR6-2) (PubMed:18189341, PubMed:18305213). The complex exists as an obligatory dimer and forms supercomplexes (SCs) in the inner mitochondrial membrane with NADH-ubiquinone oxidoreductase (complex I, CI), resulting in different assemblies (supercomplexes SCI(1)III(2) and SCI(2)III(4)) (PubMed:12970493).</text>
</comment>
<comment type="interaction">
    <interactant intactId="EBI-1777995">
        <id>Q9FKS5</id>
    </interactant>
    <interactant intactId="EBI-763400">
        <id>Q33884</id>
        <label>CCMFN2</label>
    </interactant>
    <organismsDiffer>false</organismsDiffer>
    <experiments>4</experiments>
</comment>
<comment type="interaction">
    <interactant intactId="EBI-1777995">
        <id>Q9FKS5</id>
    </interactant>
    <interactant intactId="EBI-446479">
        <id>P99999</id>
        <label>CYCS</label>
    </interactant>
    <organismsDiffer>true</organismsDiffer>
    <experiments>2</experiments>
</comment>
<comment type="subcellular location">
    <subcellularLocation>
        <location evidence="6 7">Mitochondrion inner membrane</location>
        <topology evidence="6 7">Single-pass membrane protein</topology>
    </subcellularLocation>
</comment>
<comment type="alternative products">
    <event type="alternative splicing"/>
    <isoform>
        <id>Q9FKS5-1</id>
        <name>1</name>
        <sequence type="displayed"/>
    </isoform>
    <isoform>
        <id>Q9FKS5-2</id>
        <name>2</name>
        <sequence type="described" ref="VSP_054178"/>
    </isoform>
</comment>
<comment type="PTM">
    <text evidence="1">Binds 1 heme c group covalently per subunit.</text>
</comment>
<comment type="similarity">
    <text evidence="8">Belongs to the cytochrome c family.</text>
</comment>
<comment type="sequence caution" evidence="8">
    <conflict type="erroneous initiation">
        <sequence resource="EMBL-CDS" id="CAA81123"/>
    </conflict>
    <text>Extended N-terminus.</text>
</comment>
<feature type="transit peptide" description="Mitochondrion" evidence="3">
    <location>
        <begin position="1"/>
        <end position="64"/>
    </location>
</feature>
<feature type="chain" id="PRO_0000428673" description="Cytochrome c1 2, heme protein, mitochondrial">
    <location>
        <begin position="65"/>
        <end position="307"/>
    </location>
</feature>
<feature type="topological domain" description="Mitochondrial intermembrane" evidence="2">
    <location>
        <begin position="65"/>
        <end position="270"/>
    </location>
</feature>
<feature type="transmembrane region" description="Helical" evidence="3">
    <location>
        <begin position="271"/>
        <end position="288"/>
    </location>
</feature>
<feature type="topological domain" description="Mitochondrial matrix" evidence="2">
    <location>
        <begin position="289"/>
        <end position="307"/>
    </location>
</feature>
<feature type="domain" description="Cytochrome c" evidence="4">
    <location>
        <begin position="90"/>
        <end position="197"/>
    </location>
</feature>
<feature type="binding site" description="covalent" evidence="4">
    <location>
        <position position="103"/>
    </location>
    <ligand>
        <name>heme c</name>
        <dbReference type="ChEBI" id="CHEBI:61717"/>
    </ligand>
</feature>
<feature type="binding site" description="covalent" evidence="4">
    <location>
        <position position="106"/>
    </location>
    <ligand>
        <name>heme c</name>
        <dbReference type="ChEBI" id="CHEBI:61717"/>
    </ligand>
</feature>
<feature type="binding site" description="axial binding residue" evidence="4">
    <location>
        <position position="107"/>
    </location>
    <ligand>
        <name>heme c</name>
        <dbReference type="ChEBI" id="CHEBI:61717"/>
    </ligand>
    <ligandPart>
        <name>Fe</name>
        <dbReference type="ChEBI" id="CHEBI:18248"/>
    </ligandPart>
</feature>
<feature type="binding site" description="axial binding residue" evidence="4">
    <location>
        <position position="226"/>
    </location>
    <ligand>
        <name>heme c</name>
        <dbReference type="ChEBI" id="CHEBI:61717"/>
    </ligand>
    <ligandPart>
        <name>Fe</name>
        <dbReference type="ChEBI" id="CHEBI:18248"/>
    </ligandPart>
</feature>
<feature type="splice variant" id="VSP_054178" description="In isoform 2." evidence="8">
    <location>
        <begin position="1"/>
        <end position="47"/>
    </location>
</feature>
<feature type="sequence conflict" description="In Ref. 5; CAA81123." evidence="8" ref="5">
    <original>ILSSY</original>
    <variation>HFSSS</variation>
    <location>
        <begin position="83"/>
        <end position="87"/>
    </location>
</feature>
<feature type="sequence conflict" description="In Ref. 4; BAF01305." evidence="8" ref="4">
    <original>N</original>
    <variation>H</variation>
    <location>
        <position position="141"/>
    </location>
</feature>
<feature type="sequence conflict" description="In Ref. 3; AAK91357/AAM51571." evidence="8" ref="3">
    <original>G</original>
    <variation>C</variation>
    <location>
        <position position="144"/>
    </location>
</feature>
<feature type="sequence conflict" description="In Ref. 3; AAK91357/AAM51571." evidence="8" ref="3">
    <original>S</original>
    <variation>L</variation>
    <location>
        <position position="162"/>
    </location>
</feature>
<feature type="turn" evidence="9">
    <location>
        <begin position="67"/>
        <end position="69"/>
    </location>
</feature>
<feature type="helix" evidence="9">
    <location>
        <begin position="89"/>
        <end position="101"/>
    </location>
</feature>
<feature type="turn" evidence="9">
    <location>
        <begin position="102"/>
        <end position="106"/>
    </location>
</feature>
<feature type="helix" evidence="9">
    <location>
        <begin position="114"/>
        <end position="117"/>
    </location>
</feature>
<feature type="turn" evidence="9">
    <location>
        <begin position="118"/>
        <end position="120"/>
    </location>
</feature>
<feature type="helix" evidence="9">
    <location>
        <begin position="124"/>
        <end position="132"/>
    </location>
</feature>
<feature type="strand" evidence="9">
    <location>
        <begin position="134"/>
        <end position="138"/>
    </location>
</feature>
<feature type="strand" evidence="9">
    <location>
        <begin position="147"/>
        <end position="150"/>
    </location>
</feature>
<feature type="strand" evidence="9">
    <location>
        <begin position="160"/>
        <end position="163"/>
    </location>
</feature>
<feature type="helix" evidence="9">
    <location>
        <begin position="164"/>
        <end position="170"/>
    </location>
</feature>
<feature type="turn" evidence="9">
    <location>
        <begin position="171"/>
        <end position="173"/>
    </location>
</feature>
<feature type="turn" evidence="9">
    <location>
        <begin position="182"/>
        <end position="184"/>
    </location>
</feature>
<feature type="helix" evidence="9">
    <location>
        <begin position="189"/>
        <end position="197"/>
    </location>
</feature>
<feature type="strand" evidence="9">
    <location>
        <begin position="222"/>
        <end position="226"/>
    </location>
</feature>
<feature type="helix" evidence="9">
    <location>
        <begin position="245"/>
        <end position="260"/>
    </location>
</feature>
<feature type="helix" evidence="9">
    <location>
        <begin position="264"/>
        <end position="297"/>
    </location>
</feature>
<feature type="strand" evidence="9">
    <location>
        <begin position="300"/>
        <end position="302"/>
    </location>
</feature>
<protein>
    <recommendedName>
        <fullName>Cytochrome c1 2, heme protein, mitochondrial</fullName>
    </recommendedName>
    <alternativeName>
        <fullName>Complex III subunit 4-2</fullName>
    </alternativeName>
    <alternativeName>
        <fullName>Complex III subunit IV-2</fullName>
    </alternativeName>
    <alternativeName>
        <fullName>Cytochrome b-c1 complex subunit 4-2</fullName>
    </alternativeName>
    <alternativeName>
        <fullName>Ubiquinol-cytochrome c reductase complex cytochrome c1 subunit 2</fullName>
        <shortName>Cytochrome c-1 2</shortName>
    </alternativeName>
</protein>
<reference key="1">
    <citation type="journal article" date="1998" name="DNA Res.">
        <title>Structural analysis of Arabidopsis thaliana chromosome 5. V. Sequence features of the regions of 1,381,565 bp covered by twenty one physically assigned P1 and TAC clones.</title>
        <authorList>
            <person name="Kaneko T."/>
            <person name="Kotani H."/>
            <person name="Nakamura Y."/>
            <person name="Sato S."/>
            <person name="Asamizu E."/>
            <person name="Miyajima N."/>
            <person name="Tabata S."/>
        </authorList>
    </citation>
    <scope>NUCLEOTIDE SEQUENCE [LARGE SCALE GENOMIC DNA]</scope>
    <source>
        <strain>cv. Columbia</strain>
    </source>
</reference>
<reference key="2">
    <citation type="journal article" date="2017" name="Plant J.">
        <title>Araport11: a complete reannotation of the Arabidopsis thaliana reference genome.</title>
        <authorList>
            <person name="Cheng C.Y."/>
            <person name="Krishnakumar V."/>
            <person name="Chan A.P."/>
            <person name="Thibaud-Nissen F."/>
            <person name="Schobel S."/>
            <person name="Town C.D."/>
        </authorList>
    </citation>
    <scope>GENOME REANNOTATION</scope>
    <source>
        <strain>cv. Columbia</strain>
    </source>
</reference>
<reference key="3">
    <citation type="journal article" date="2003" name="Science">
        <title>Empirical analysis of transcriptional activity in the Arabidopsis genome.</title>
        <authorList>
            <person name="Yamada K."/>
            <person name="Lim J."/>
            <person name="Dale J.M."/>
            <person name="Chen H."/>
            <person name="Shinn P."/>
            <person name="Palm C.J."/>
            <person name="Southwick A.M."/>
            <person name="Wu H.C."/>
            <person name="Kim C.J."/>
            <person name="Nguyen M."/>
            <person name="Pham P.K."/>
            <person name="Cheuk R.F."/>
            <person name="Karlin-Newmann G."/>
            <person name="Liu S.X."/>
            <person name="Lam B."/>
            <person name="Sakano H."/>
            <person name="Wu T."/>
            <person name="Yu G."/>
            <person name="Miranda M."/>
            <person name="Quach H.L."/>
            <person name="Tripp M."/>
            <person name="Chang C.H."/>
            <person name="Lee J.M."/>
            <person name="Toriumi M.J."/>
            <person name="Chan M.M."/>
            <person name="Tang C.C."/>
            <person name="Onodera C.S."/>
            <person name="Deng J.M."/>
            <person name="Akiyama K."/>
            <person name="Ansari Y."/>
            <person name="Arakawa T."/>
            <person name="Banh J."/>
            <person name="Banno F."/>
            <person name="Bowser L."/>
            <person name="Brooks S.Y."/>
            <person name="Carninci P."/>
            <person name="Chao Q."/>
            <person name="Choy N."/>
            <person name="Enju A."/>
            <person name="Goldsmith A.D."/>
            <person name="Gurjal M."/>
            <person name="Hansen N.F."/>
            <person name="Hayashizaki Y."/>
            <person name="Johnson-Hopson C."/>
            <person name="Hsuan V.W."/>
            <person name="Iida K."/>
            <person name="Karnes M."/>
            <person name="Khan S."/>
            <person name="Koesema E."/>
            <person name="Ishida J."/>
            <person name="Jiang P.X."/>
            <person name="Jones T."/>
            <person name="Kawai J."/>
            <person name="Kamiya A."/>
            <person name="Meyers C."/>
            <person name="Nakajima M."/>
            <person name="Narusaka M."/>
            <person name="Seki M."/>
            <person name="Sakurai T."/>
            <person name="Satou M."/>
            <person name="Tamse R."/>
            <person name="Vaysberg M."/>
            <person name="Wallender E.K."/>
            <person name="Wong C."/>
            <person name="Yamamura Y."/>
            <person name="Yuan S."/>
            <person name="Shinozaki K."/>
            <person name="Davis R.W."/>
            <person name="Theologis A."/>
            <person name="Ecker J.R."/>
        </authorList>
    </citation>
    <scope>NUCLEOTIDE SEQUENCE [LARGE SCALE MRNA] (ISOFORM 1)</scope>
    <source>
        <strain>cv. Columbia</strain>
    </source>
</reference>
<reference key="4">
    <citation type="submission" date="2006-07" db="EMBL/GenBank/DDBJ databases">
        <title>Large-scale analysis of RIKEN Arabidopsis full-length (RAFL) cDNAs.</title>
        <authorList>
            <person name="Totoki Y."/>
            <person name="Seki M."/>
            <person name="Ishida J."/>
            <person name="Nakajima M."/>
            <person name="Enju A."/>
            <person name="Kamiya A."/>
            <person name="Narusaka M."/>
            <person name="Shin-i T."/>
            <person name="Nakagawa M."/>
            <person name="Sakamoto N."/>
            <person name="Oishi K."/>
            <person name="Kohara Y."/>
            <person name="Kobayashi M."/>
            <person name="Toyoda A."/>
            <person name="Sakaki Y."/>
            <person name="Sakurai T."/>
            <person name="Iida K."/>
            <person name="Akiyama K."/>
            <person name="Satou M."/>
            <person name="Toyoda T."/>
            <person name="Konagaya A."/>
            <person name="Carninci P."/>
            <person name="Kawai J."/>
            <person name="Hayashizaki Y."/>
            <person name="Shinozaki K."/>
        </authorList>
    </citation>
    <scope>NUCLEOTIDE SEQUENCE [LARGE SCALE MRNA] (ISOFORM 1)</scope>
    <source>
        <strain>cv. Columbia</strain>
    </source>
</reference>
<reference key="5">
    <citation type="submission" date="1993-09" db="EMBL/GenBank/DDBJ databases">
        <title>The Arabidopsis thaliana transcribed genome: the GDR cDNA program.</title>
        <authorList>
            <person name="Hofte H."/>
        </authorList>
    </citation>
    <scope>NUCLEOTIDE SEQUENCE [LARGE SCALE MRNA] OF 1-87 (ISOFORM 1)</scope>
    <source>
        <strain>cv. Columbia</strain>
        <tissue>Seedling</tissue>
    </source>
</reference>
<reference key="6">
    <citation type="journal article" date="2003" name="Plant Physiol.">
        <title>New insights into the respiratory chain of plant mitochondria. Supercomplexes and a unique composition of complex II.</title>
        <authorList>
            <person name="Eubel H."/>
            <person name="Jansch L."/>
            <person name="Braun H.P."/>
        </authorList>
    </citation>
    <scope>SUBUNIT</scope>
</reference>
<reference key="7">
    <citation type="journal article" date="2008" name="J. Proteome Res.">
        <title>Resolving and identifying protein components of plant mitochondrial respiratory complexes using three dimensions of gel electrophoresis.</title>
        <authorList>
            <person name="Meyer E.H."/>
            <person name="Taylor N.L."/>
            <person name="Millar A.H."/>
        </authorList>
    </citation>
    <scope>SUBCELLULAR LOCATION</scope>
    <scope>SUBUNIT</scope>
    <scope>IDENTIFICATION BY MASS SPECTROMETRY</scope>
    <scope>REVIEW</scope>
    <scope>NOMENCLATURE</scope>
</reference>
<reference key="8">
    <citation type="journal article" date="2008" name="Plant Physiol.">
        <title>Arabidopsis PPR40 connects abiotic stress responses to mitochondrial electron transport.</title>
        <authorList>
            <person name="Zsigmond L."/>
            <person name="Rigo G."/>
            <person name="Szarka A."/>
            <person name="Szekely G."/>
            <person name="Oetvoes K."/>
            <person name="Darula Z."/>
            <person name="Medzihradszky K.F."/>
            <person name="Koncz C."/>
            <person name="Koncz Z."/>
            <person name="Szabados L."/>
        </authorList>
    </citation>
    <scope>SUBCELLULAR LOCATION</scope>
    <scope>SUBUNIT</scope>
    <scope>IDENTIFICATION BY MASS SPECTROMETRY</scope>
</reference>
<proteinExistence type="evidence at protein level"/>
<accession>Q9FKS5</accession>
<accession>F4KIR8</accession>
<accession>Q0WL66</accession>
<accession>Q0WNJ4</accession>
<accession>Q42065</accession>
<accession>Q94A63</accession>
<gene>
    <name type="primary">CYC1-2</name>
    <name type="ordered locus">At5g40810</name>
    <name type="ORF">MHK7.4</name>
</gene>
<organism>
    <name type="scientific">Arabidopsis thaliana</name>
    <name type="common">Mouse-ear cress</name>
    <dbReference type="NCBI Taxonomy" id="3702"/>
    <lineage>
        <taxon>Eukaryota</taxon>
        <taxon>Viridiplantae</taxon>
        <taxon>Streptophyta</taxon>
        <taxon>Embryophyta</taxon>
        <taxon>Tracheophyta</taxon>
        <taxon>Spermatophyta</taxon>
        <taxon>Magnoliopsida</taxon>
        <taxon>eudicotyledons</taxon>
        <taxon>Gunneridae</taxon>
        <taxon>Pentapetalae</taxon>
        <taxon>rosids</taxon>
        <taxon>malvids</taxon>
        <taxon>Brassicales</taxon>
        <taxon>Brassicaceae</taxon>
        <taxon>Camelineae</taxon>
        <taxon>Arabidopsis</taxon>
    </lineage>
</organism>
<name>CYC1B_ARATH</name>
<dbReference type="EMBL" id="AB011477">
    <property type="protein sequence ID" value="BAB11343.1"/>
    <property type="molecule type" value="Genomic_DNA"/>
</dbReference>
<dbReference type="EMBL" id="CP002688">
    <property type="protein sequence ID" value="AED94597.1"/>
    <property type="molecule type" value="Genomic_DNA"/>
</dbReference>
<dbReference type="EMBL" id="CP002688">
    <property type="protein sequence ID" value="AED94598.1"/>
    <property type="molecule type" value="Genomic_DNA"/>
</dbReference>
<dbReference type="EMBL" id="AY050340">
    <property type="protein sequence ID" value="AAK91357.1"/>
    <property type="molecule type" value="mRNA"/>
</dbReference>
<dbReference type="EMBL" id="AY116937">
    <property type="protein sequence ID" value="AAM51571.1"/>
    <property type="molecule type" value="mRNA"/>
</dbReference>
<dbReference type="EMBL" id="AK229445">
    <property type="protein sequence ID" value="BAF01305.1"/>
    <property type="molecule type" value="mRNA"/>
</dbReference>
<dbReference type="EMBL" id="AK230342">
    <property type="protein sequence ID" value="BAF02141.1"/>
    <property type="molecule type" value="mRNA"/>
</dbReference>
<dbReference type="EMBL" id="Z25972">
    <property type="protein sequence ID" value="CAA81123.1"/>
    <property type="status" value="ALT_INIT"/>
    <property type="molecule type" value="mRNA"/>
</dbReference>
<dbReference type="RefSeq" id="NP_001154756.1">
    <molecule id="Q9FKS5-2"/>
    <property type="nucleotide sequence ID" value="NM_001161284.1"/>
</dbReference>
<dbReference type="RefSeq" id="NP_198897.1">
    <molecule id="Q9FKS5-1"/>
    <property type="nucleotide sequence ID" value="NM_123446.5"/>
</dbReference>
<dbReference type="PDB" id="8BEL">
    <property type="method" value="EM"/>
    <property type="resolution" value="2.25 A"/>
    <property type="chains" value="E/O=1-307"/>
</dbReference>
<dbReference type="PDB" id="8BPX">
    <property type="method" value="EM"/>
    <property type="resolution" value="2.09 A"/>
    <property type="chains" value="AE/BE=1-307"/>
</dbReference>
<dbReference type="PDB" id="8BQ5">
    <property type="method" value="EM"/>
    <property type="resolution" value="2.73 A"/>
    <property type="chains" value="AE/BE=1-307"/>
</dbReference>
<dbReference type="PDB" id="8BQ6">
    <property type="method" value="EM"/>
    <property type="resolution" value="2.80 A"/>
    <property type="chains" value="AE/BE=1-307"/>
</dbReference>
<dbReference type="PDBsum" id="8BEL"/>
<dbReference type="PDBsum" id="8BPX"/>
<dbReference type="PDBsum" id="8BQ5"/>
<dbReference type="PDBsum" id="8BQ6"/>
<dbReference type="EMDB" id="EMD-16007"/>
<dbReference type="EMDB" id="EMD-16168"/>
<dbReference type="EMDB" id="EMD-16171"/>
<dbReference type="EMDB" id="EMD-16172"/>
<dbReference type="SMR" id="Q9FKS5"/>
<dbReference type="BioGRID" id="19332">
    <property type="interactions" value="14"/>
</dbReference>
<dbReference type="FunCoup" id="Q9FKS5">
    <property type="interactions" value="3581"/>
</dbReference>
<dbReference type="IntAct" id="Q9FKS5">
    <property type="interactions" value="4"/>
</dbReference>
<dbReference type="MINT" id="Q9FKS5"/>
<dbReference type="STRING" id="3702.Q9FKS5"/>
<dbReference type="PaxDb" id="3702-AT5G40810.1"/>
<dbReference type="ProteomicsDB" id="220436">
    <molecule id="Q9FKS5-1"/>
</dbReference>
<dbReference type="EnsemblPlants" id="AT5G40810.1">
    <molecule id="Q9FKS5-1"/>
    <property type="protein sequence ID" value="AT5G40810.1"/>
    <property type="gene ID" value="AT5G40810"/>
</dbReference>
<dbReference type="EnsemblPlants" id="AT5G40810.2">
    <molecule id="Q9FKS5-2"/>
    <property type="protein sequence ID" value="AT5G40810.2"/>
    <property type="gene ID" value="AT5G40810"/>
</dbReference>
<dbReference type="GeneID" id="834081"/>
<dbReference type="Gramene" id="AT5G40810.1">
    <molecule id="Q9FKS5-1"/>
    <property type="protein sequence ID" value="AT5G40810.1"/>
    <property type="gene ID" value="AT5G40810"/>
</dbReference>
<dbReference type="Gramene" id="AT5G40810.2">
    <molecule id="Q9FKS5-2"/>
    <property type="protein sequence ID" value="AT5G40810.2"/>
    <property type="gene ID" value="AT5G40810"/>
</dbReference>
<dbReference type="KEGG" id="ath:AT5G40810"/>
<dbReference type="Araport" id="AT5G40810"/>
<dbReference type="TAIR" id="AT5G40810"/>
<dbReference type="eggNOG" id="KOG3052">
    <property type="taxonomic scope" value="Eukaryota"/>
</dbReference>
<dbReference type="HOGENOM" id="CLU_040334_0_0_1"/>
<dbReference type="InParanoid" id="Q9FKS5"/>
<dbReference type="OMA" id="WVKKFKW"/>
<dbReference type="OrthoDB" id="5925at2759"/>
<dbReference type="PhylomeDB" id="Q9FKS5"/>
<dbReference type="BioCyc" id="ARA:AT5G40810-MONOMER"/>
<dbReference type="BioCyc" id="MetaCyc:MONOMERQT-2771"/>
<dbReference type="CD-CODE" id="4299E36E">
    <property type="entry name" value="Nucleolus"/>
</dbReference>
<dbReference type="PRO" id="PR:Q9FKS5"/>
<dbReference type="Proteomes" id="UP000006548">
    <property type="component" value="Chromosome 5"/>
</dbReference>
<dbReference type="ExpressionAtlas" id="Q9FKS5">
    <property type="expression patterns" value="baseline and differential"/>
</dbReference>
<dbReference type="GO" id="GO:0005743">
    <property type="term" value="C:mitochondrial inner membrane"/>
    <property type="evidence" value="ECO:0007669"/>
    <property type="project" value="UniProtKB-SubCell"/>
</dbReference>
<dbReference type="GO" id="GO:0005739">
    <property type="term" value="C:mitochondrion"/>
    <property type="evidence" value="ECO:0007005"/>
    <property type="project" value="TAIR"/>
</dbReference>
<dbReference type="GO" id="GO:0009536">
    <property type="term" value="C:plastid"/>
    <property type="evidence" value="ECO:0007005"/>
    <property type="project" value="TAIR"/>
</dbReference>
<dbReference type="GO" id="GO:0005773">
    <property type="term" value="C:vacuole"/>
    <property type="evidence" value="ECO:0007005"/>
    <property type="project" value="TAIR"/>
</dbReference>
<dbReference type="GO" id="GO:0009055">
    <property type="term" value="F:electron transfer activity"/>
    <property type="evidence" value="ECO:0007669"/>
    <property type="project" value="InterPro"/>
</dbReference>
<dbReference type="GO" id="GO:0020037">
    <property type="term" value="F:heme binding"/>
    <property type="evidence" value="ECO:0007669"/>
    <property type="project" value="InterPro"/>
</dbReference>
<dbReference type="GO" id="GO:0046872">
    <property type="term" value="F:metal ion binding"/>
    <property type="evidence" value="ECO:0007669"/>
    <property type="project" value="UniProtKB-KW"/>
</dbReference>
<dbReference type="FunFam" id="1.10.760.10:FF:000002">
    <property type="entry name" value="Cytochrome c1, heme protein"/>
    <property type="match status" value="1"/>
</dbReference>
<dbReference type="FunFam" id="1.20.5.100:FF:000003">
    <property type="entry name" value="Cytochrome c1, heme protein, mitochondrial"/>
    <property type="match status" value="1"/>
</dbReference>
<dbReference type="Gene3D" id="1.10.760.10">
    <property type="entry name" value="Cytochrome c-like domain"/>
    <property type="match status" value="1"/>
</dbReference>
<dbReference type="Gene3D" id="1.20.5.100">
    <property type="entry name" value="Cytochrome c1, transmembrane anchor, C-terminal"/>
    <property type="match status" value="1"/>
</dbReference>
<dbReference type="InterPro" id="IPR009056">
    <property type="entry name" value="Cyt_c-like_dom"/>
</dbReference>
<dbReference type="InterPro" id="IPR036909">
    <property type="entry name" value="Cyt_c-like_dom_sf"/>
</dbReference>
<dbReference type="InterPro" id="IPR002326">
    <property type="entry name" value="Cyt_c1"/>
</dbReference>
<dbReference type="InterPro" id="IPR021157">
    <property type="entry name" value="Cyt_c1_TM_anchor_C"/>
</dbReference>
<dbReference type="PANTHER" id="PTHR10266">
    <property type="entry name" value="CYTOCHROME C1"/>
    <property type="match status" value="1"/>
</dbReference>
<dbReference type="PANTHER" id="PTHR10266:SF3">
    <property type="entry name" value="CYTOCHROME C1, HEME PROTEIN, MITOCHONDRIAL"/>
    <property type="match status" value="1"/>
</dbReference>
<dbReference type="Pfam" id="PF02167">
    <property type="entry name" value="Cytochrom_C1"/>
    <property type="match status" value="1"/>
</dbReference>
<dbReference type="PRINTS" id="PR00603">
    <property type="entry name" value="CYTOCHROMEC1"/>
</dbReference>
<dbReference type="SUPFAM" id="SSF46626">
    <property type="entry name" value="Cytochrome c"/>
    <property type="match status" value="1"/>
</dbReference>
<dbReference type="SUPFAM" id="SSF81496">
    <property type="entry name" value="Cytochrome c1 subunit of cytochrome bc1 complex (Ubiquinol-cytochrome c reductase), transmembrane anchor"/>
    <property type="match status" value="1"/>
</dbReference>
<dbReference type="PROSITE" id="PS51007">
    <property type="entry name" value="CYTC"/>
    <property type="match status" value="1"/>
</dbReference>